<feature type="chain" id="PRO_0000139301" description="Putative nickel-responsive regulator 3">
    <location>
        <begin position="1"/>
        <end position="140"/>
    </location>
</feature>
<feature type="binding site" evidence="1">
    <location>
        <position position="81"/>
    </location>
    <ligand>
        <name>Ni(2+)</name>
        <dbReference type="ChEBI" id="CHEBI:49786"/>
    </ligand>
</feature>
<feature type="binding site" evidence="1">
    <location>
        <position position="92"/>
    </location>
    <ligand>
        <name>Ni(2+)</name>
        <dbReference type="ChEBI" id="CHEBI:49786"/>
    </ligand>
</feature>
<feature type="binding site" evidence="1">
    <location>
        <position position="94"/>
    </location>
    <ligand>
        <name>Ni(2+)</name>
        <dbReference type="ChEBI" id="CHEBI:49786"/>
    </ligand>
</feature>
<feature type="binding site" evidence="1">
    <location>
        <position position="100"/>
    </location>
    <ligand>
        <name>Ni(2+)</name>
        <dbReference type="ChEBI" id="CHEBI:49786"/>
    </ligand>
</feature>
<accession>Q8TIR7</accession>
<name>NIKR3_METAC</name>
<dbReference type="EMBL" id="AE010299">
    <property type="protein sequence ID" value="AAM07423.1"/>
    <property type="molecule type" value="Genomic_DNA"/>
</dbReference>
<dbReference type="SMR" id="Q8TIR7"/>
<dbReference type="FunCoup" id="Q8TIR7">
    <property type="interactions" value="1"/>
</dbReference>
<dbReference type="EnsemblBacteria" id="AAM07423">
    <property type="protein sequence ID" value="AAM07423"/>
    <property type="gene ID" value="MA_4075"/>
</dbReference>
<dbReference type="KEGG" id="mac:MA_4075"/>
<dbReference type="HOGENOM" id="CLU_113319_1_2_2"/>
<dbReference type="InParanoid" id="Q8TIR7"/>
<dbReference type="OrthoDB" id="25654at2157"/>
<dbReference type="PhylomeDB" id="Q8TIR7"/>
<dbReference type="Proteomes" id="UP000002487">
    <property type="component" value="Chromosome"/>
</dbReference>
<dbReference type="GO" id="GO:0003677">
    <property type="term" value="F:DNA binding"/>
    <property type="evidence" value="ECO:0000318"/>
    <property type="project" value="GO_Central"/>
</dbReference>
<dbReference type="GO" id="GO:0003700">
    <property type="term" value="F:DNA-binding transcription factor activity"/>
    <property type="evidence" value="ECO:0007669"/>
    <property type="project" value="UniProtKB-UniRule"/>
</dbReference>
<dbReference type="GO" id="GO:0016151">
    <property type="term" value="F:nickel cation binding"/>
    <property type="evidence" value="ECO:0007669"/>
    <property type="project" value="UniProtKB-UniRule"/>
</dbReference>
<dbReference type="GO" id="GO:0006355">
    <property type="term" value="P:regulation of DNA-templated transcription"/>
    <property type="evidence" value="ECO:0000318"/>
    <property type="project" value="GO_Central"/>
</dbReference>
<dbReference type="GO" id="GO:0010045">
    <property type="term" value="P:response to nickel cation"/>
    <property type="evidence" value="ECO:0007669"/>
    <property type="project" value="InterPro"/>
</dbReference>
<dbReference type="CDD" id="cd22231">
    <property type="entry name" value="RHH_NikR_HicB-like"/>
    <property type="match status" value="1"/>
</dbReference>
<dbReference type="Gene3D" id="3.30.70.1150">
    <property type="entry name" value="ACT-like. Chain A, domain 2"/>
    <property type="match status" value="1"/>
</dbReference>
<dbReference type="Gene3D" id="1.10.1220.10">
    <property type="entry name" value="Met repressor-like"/>
    <property type="match status" value="1"/>
</dbReference>
<dbReference type="HAMAP" id="MF_00476">
    <property type="entry name" value="NikR"/>
    <property type="match status" value="1"/>
</dbReference>
<dbReference type="InterPro" id="IPR027271">
    <property type="entry name" value="Acetolactate_synth/TF_NikR_C"/>
</dbReference>
<dbReference type="InterPro" id="IPR045865">
    <property type="entry name" value="ACT-like_dom_sf"/>
</dbReference>
<dbReference type="InterPro" id="IPR013321">
    <property type="entry name" value="Arc_rbn_hlx_hlx"/>
</dbReference>
<dbReference type="InterPro" id="IPR002145">
    <property type="entry name" value="CopG"/>
</dbReference>
<dbReference type="InterPro" id="IPR050192">
    <property type="entry name" value="CopG/NikR_regulator"/>
</dbReference>
<dbReference type="InterPro" id="IPR022988">
    <property type="entry name" value="Ni_resp_reg_NikR"/>
</dbReference>
<dbReference type="InterPro" id="IPR010985">
    <property type="entry name" value="Ribbon_hlx_hlx"/>
</dbReference>
<dbReference type="InterPro" id="IPR014864">
    <property type="entry name" value="TF_NikR_Ni-bd_C"/>
</dbReference>
<dbReference type="NCBIfam" id="NF001884">
    <property type="entry name" value="PRK00630.1"/>
    <property type="match status" value="1"/>
</dbReference>
<dbReference type="NCBIfam" id="NF002169">
    <property type="entry name" value="PRK01002.1"/>
    <property type="match status" value="1"/>
</dbReference>
<dbReference type="NCBIfam" id="NF002815">
    <property type="entry name" value="PRK02967.1"/>
    <property type="match status" value="1"/>
</dbReference>
<dbReference type="NCBIfam" id="NF003381">
    <property type="entry name" value="PRK04460.1"/>
    <property type="match status" value="1"/>
</dbReference>
<dbReference type="PANTHER" id="PTHR34719">
    <property type="entry name" value="NICKEL-RESPONSIVE REGULATOR"/>
    <property type="match status" value="1"/>
</dbReference>
<dbReference type="PANTHER" id="PTHR34719:SF2">
    <property type="entry name" value="NICKEL-RESPONSIVE REGULATOR"/>
    <property type="match status" value="1"/>
</dbReference>
<dbReference type="Pfam" id="PF08753">
    <property type="entry name" value="NikR_C"/>
    <property type="match status" value="1"/>
</dbReference>
<dbReference type="Pfam" id="PF01402">
    <property type="entry name" value="RHH_1"/>
    <property type="match status" value="1"/>
</dbReference>
<dbReference type="SUPFAM" id="SSF55021">
    <property type="entry name" value="ACT-like"/>
    <property type="match status" value="1"/>
</dbReference>
<dbReference type="SUPFAM" id="SSF47598">
    <property type="entry name" value="Ribbon-helix-helix"/>
    <property type="match status" value="1"/>
</dbReference>
<sequence length="140" mass="15818">METELMRIGVSLPDTLLSKFDEIIEKRGYSSRSEGIRDAIRSYISYYEWMGDIKGHRVGTVAVIYDHTKRGLSNALADIQHHYSHLIKSSVHIHLDHDNCFEVIVLDGDGEEIKELAEAIMALKGVKFSKLTTVASNEKI</sequence>
<reference key="1">
    <citation type="journal article" date="2002" name="Genome Res.">
        <title>The genome of Methanosarcina acetivorans reveals extensive metabolic and physiological diversity.</title>
        <authorList>
            <person name="Galagan J.E."/>
            <person name="Nusbaum C."/>
            <person name="Roy A."/>
            <person name="Endrizzi M.G."/>
            <person name="Macdonald P."/>
            <person name="FitzHugh W."/>
            <person name="Calvo S."/>
            <person name="Engels R."/>
            <person name="Smirnov S."/>
            <person name="Atnoor D."/>
            <person name="Brown A."/>
            <person name="Allen N."/>
            <person name="Naylor J."/>
            <person name="Stange-Thomann N."/>
            <person name="DeArellano K."/>
            <person name="Johnson R."/>
            <person name="Linton L."/>
            <person name="McEwan P."/>
            <person name="McKernan K."/>
            <person name="Talamas J."/>
            <person name="Tirrell A."/>
            <person name="Ye W."/>
            <person name="Zimmer A."/>
            <person name="Barber R.D."/>
            <person name="Cann I."/>
            <person name="Graham D.E."/>
            <person name="Grahame D.A."/>
            <person name="Guss A.M."/>
            <person name="Hedderich R."/>
            <person name="Ingram-Smith C."/>
            <person name="Kuettner H.C."/>
            <person name="Krzycki J.A."/>
            <person name="Leigh J.A."/>
            <person name="Li W."/>
            <person name="Liu J."/>
            <person name="Mukhopadhyay B."/>
            <person name="Reeve J.N."/>
            <person name="Smith K."/>
            <person name="Springer T.A."/>
            <person name="Umayam L.A."/>
            <person name="White O."/>
            <person name="White R.H."/>
            <person name="de Macario E.C."/>
            <person name="Ferry J.G."/>
            <person name="Jarrell K.F."/>
            <person name="Jing H."/>
            <person name="Macario A.J.L."/>
            <person name="Paulsen I.T."/>
            <person name="Pritchett M."/>
            <person name="Sowers K.R."/>
            <person name="Swanson R.V."/>
            <person name="Zinder S.H."/>
            <person name="Lander E."/>
            <person name="Metcalf W.W."/>
            <person name="Birren B."/>
        </authorList>
    </citation>
    <scope>NUCLEOTIDE SEQUENCE [LARGE SCALE GENOMIC DNA]</scope>
    <source>
        <strain>ATCC 35395 / DSM 2834 / JCM 12185 / C2A</strain>
    </source>
</reference>
<protein>
    <recommendedName>
        <fullName>Putative nickel-responsive regulator 3</fullName>
    </recommendedName>
</protein>
<gene>
    <name type="ordered locus">MA_4075</name>
</gene>
<evidence type="ECO:0000250" key="1"/>
<evidence type="ECO:0000305" key="2"/>
<proteinExistence type="inferred from homology"/>
<comment type="function">
    <text evidence="2">Transcriptional regulator.</text>
</comment>
<comment type="cofactor">
    <cofactor evidence="1">
        <name>Ni(2+)</name>
        <dbReference type="ChEBI" id="CHEBI:49786"/>
    </cofactor>
    <text evidence="1">Binds 1 nickel ion per subunit.</text>
</comment>
<comment type="similarity">
    <text evidence="2">Belongs to the transcriptional regulatory CopG/NikR family.</text>
</comment>
<organism>
    <name type="scientific">Methanosarcina acetivorans (strain ATCC 35395 / DSM 2834 / JCM 12185 / C2A)</name>
    <dbReference type="NCBI Taxonomy" id="188937"/>
    <lineage>
        <taxon>Archaea</taxon>
        <taxon>Methanobacteriati</taxon>
        <taxon>Methanobacteriota</taxon>
        <taxon>Stenosarchaea group</taxon>
        <taxon>Methanomicrobia</taxon>
        <taxon>Methanosarcinales</taxon>
        <taxon>Methanosarcinaceae</taxon>
        <taxon>Methanosarcina</taxon>
    </lineage>
</organism>
<keyword id="KW-0238">DNA-binding</keyword>
<keyword id="KW-0479">Metal-binding</keyword>
<keyword id="KW-0533">Nickel</keyword>
<keyword id="KW-1185">Reference proteome</keyword>
<keyword id="KW-0804">Transcription</keyword>
<keyword id="KW-0805">Transcription regulation</keyword>